<dbReference type="EC" id="2.7.1.23" evidence="1"/>
<dbReference type="EMBL" id="BA000030">
    <property type="protein sequence ID" value="BAC68745.1"/>
    <property type="molecule type" value="Genomic_DNA"/>
</dbReference>
<dbReference type="RefSeq" id="WP_010982473.1">
    <property type="nucleotide sequence ID" value="NZ_JZJK01000051.1"/>
</dbReference>
<dbReference type="SMR" id="Q82P98"/>
<dbReference type="GeneID" id="41538143"/>
<dbReference type="KEGG" id="sma:SAVERM_1035"/>
<dbReference type="eggNOG" id="COG0061">
    <property type="taxonomic scope" value="Bacteria"/>
</dbReference>
<dbReference type="HOGENOM" id="CLU_008831_0_0_11"/>
<dbReference type="OrthoDB" id="9774737at2"/>
<dbReference type="Proteomes" id="UP000000428">
    <property type="component" value="Chromosome"/>
</dbReference>
<dbReference type="GO" id="GO:0005737">
    <property type="term" value="C:cytoplasm"/>
    <property type="evidence" value="ECO:0007669"/>
    <property type="project" value="UniProtKB-SubCell"/>
</dbReference>
<dbReference type="GO" id="GO:0005524">
    <property type="term" value="F:ATP binding"/>
    <property type="evidence" value="ECO:0007669"/>
    <property type="project" value="UniProtKB-KW"/>
</dbReference>
<dbReference type="GO" id="GO:0046872">
    <property type="term" value="F:metal ion binding"/>
    <property type="evidence" value="ECO:0007669"/>
    <property type="project" value="UniProtKB-UniRule"/>
</dbReference>
<dbReference type="GO" id="GO:0051287">
    <property type="term" value="F:NAD binding"/>
    <property type="evidence" value="ECO:0007669"/>
    <property type="project" value="UniProtKB-ARBA"/>
</dbReference>
<dbReference type="GO" id="GO:0003951">
    <property type="term" value="F:NAD+ kinase activity"/>
    <property type="evidence" value="ECO:0007669"/>
    <property type="project" value="UniProtKB-UniRule"/>
</dbReference>
<dbReference type="GO" id="GO:0019674">
    <property type="term" value="P:NAD metabolic process"/>
    <property type="evidence" value="ECO:0007669"/>
    <property type="project" value="InterPro"/>
</dbReference>
<dbReference type="GO" id="GO:0006741">
    <property type="term" value="P:NADP biosynthetic process"/>
    <property type="evidence" value="ECO:0007669"/>
    <property type="project" value="UniProtKB-UniRule"/>
</dbReference>
<dbReference type="FunFam" id="2.60.200.30:FF:000007">
    <property type="entry name" value="NAD kinase"/>
    <property type="match status" value="1"/>
</dbReference>
<dbReference type="FunFam" id="3.40.50.10330:FF:000053">
    <property type="entry name" value="NAD kinase 1"/>
    <property type="match status" value="1"/>
</dbReference>
<dbReference type="Gene3D" id="3.40.50.10330">
    <property type="entry name" value="Probable inorganic polyphosphate/atp-NAD kinase, domain 1"/>
    <property type="match status" value="1"/>
</dbReference>
<dbReference type="Gene3D" id="2.60.200.30">
    <property type="entry name" value="Probable inorganic polyphosphate/atp-NAD kinase, domain 2"/>
    <property type="match status" value="1"/>
</dbReference>
<dbReference type="HAMAP" id="MF_00361">
    <property type="entry name" value="NAD_kinase"/>
    <property type="match status" value="1"/>
</dbReference>
<dbReference type="InterPro" id="IPR017438">
    <property type="entry name" value="ATP-NAD_kinase_N"/>
</dbReference>
<dbReference type="InterPro" id="IPR017437">
    <property type="entry name" value="ATP-NAD_kinase_PpnK-typ_C"/>
</dbReference>
<dbReference type="InterPro" id="IPR016064">
    <property type="entry name" value="NAD/diacylglycerol_kinase_sf"/>
</dbReference>
<dbReference type="InterPro" id="IPR002504">
    <property type="entry name" value="NADK"/>
</dbReference>
<dbReference type="PANTHER" id="PTHR20275">
    <property type="entry name" value="NAD KINASE"/>
    <property type="match status" value="1"/>
</dbReference>
<dbReference type="PANTHER" id="PTHR20275:SF0">
    <property type="entry name" value="NAD KINASE"/>
    <property type="match status" value="1"/>
</dbReference>
<dbReference type="Pfam" id="PF01513">
    <property type="entry name" value="NAD_kinase"/>
    <property type="match status" value="1"/>
</dbReference>
<dbReference type="Pfam" id="PF20143">
    <property type="entry name" value="NAD_kinase_C"/>
    <property type="match status" value="1"/>
</dbReference>
<dbReference type="SUPFAM" id="SSF111331">
    <property type="entry name" value="NAD kinase/diacylglycerol kinase-like"/>
    <property type="match status" value="1"/>
</dbReference>
<sequence length="357" mass="37612">MTVTRVGLVMHGGRAQAGDAARIVRGWCAERGVHCADIDVWRDDTRHSAREEVAAAGNPDLIVTLGGDGTFLRGARLAAENDALVLGVDLGRVGFLTEVPAAAVCEALEAVQEDRITVESRMLLTLRASRRLQVPTGMEALLRYGRGPLLPPPRVRTDCAEGDDWGIALHVTALNDIVLEKLARDRQVSVGVYLAGRLLASYSADALLVATPTGSTAYSFAAGGPVVSPRAEALIFTPVAPHMAFNRSVVAAPDEPIALRVLDRSGPAAVSVDGQLRGVLDPGDWIGVYAAPRRLKAVRLGPMDFYGRLRERMNLTDAPAAVADGQAAPLWPVTSAPPADLAHLTLPPGPGDTPSAS</sequence>
<keyword id="KW-0067">ATP-binding</keyword>
<keyword id="KW-0963">Cytoplasm</keyword>
<keyword id="KW-0418">Kinase</keyword>
<keyword id="KW-0520">NAD</keyword>
<keyword id="KW-0521">NADP</keyword>
<keyword id="KW-0547">Nucleotide-binding</keyword>
<keyword id="KW-1185">Reference proteome</keyword>
<keyword id="KW-0808">Transferase</keyword>
<evidence type="ECO:0000255" key="1">
    <source>
        <dbReference type="HAMAP-Rule" id="MF_00361"/>
    </source>
</evidence>
<accession>Q82P98</accession>
<feature type="chain" id="PRO_0000229698" description="NAD kinase 1">
    <location>
        <begin position="1"/>
        <end position="357"/>
    </location>
</feature>
<feature type="active site" description="Proton acceptor" evidence="1">
    <location>
        <position position="68"/>
    </location>
</feature>
<feature type="binding site" evidence="1">
    <location>
        <begin position="68"/>
        <end position="69"/>
    </location>
    <ligand>
        <name>NAD(+)</name>
        <dbReference type="ChEBI" id="CHEBI:57540"/>
    </ligand>
</feature>
<feature type="binding site" evidence="1">
    <location>
        <position position="73"/>
    </location>
    <ligand>
        <name>NAD(+)</name>
        <dbReference type="ChEBI" id="CHEBI:57540"/>
    </ligand>
</feature>
<feature type="binding site" evidence="1">
    <location>
        <begin position="175"/>
        <end position="176"/>
    </location>
    <ligand>
        <name>NAD(+)</name>
        <dbReference type="ChEBI" id="CHEBI:57540"/>
    </ligand>
</feature>
<feature type="binding site" evidence="1">
    <location>
        <position position="186"/>
    </location>
    <ligand>
        <name>NAD(+)</name>
        <dbReference type="ChEBI" id="CHEBI:57540"/>
    </ligand>
</feature>
<feature type="binding site" evidence="1">
    <location>
        <position position="205"/>
    </location>
    <ligand>
        <name>NAD(+)</name>
        <dbReference type="ChEBI" id="CHEBI:57540"/>
    </ligand>
</feature>
<feature type="binding site" evidence="1">
    <location>
        <position position="240"/>
    </location>
    <ligand>
        <name>NAD(+)</name>
        <dbReference type="ChEBI" id="CHEBI:57540"/>
    </ligand>
</feature>
<feature type="binding site" evidence="1">
    <location>
        <position position="275"/>
    </location>
    <ligand>
        <name>NAD(+)</name>
        <dbReference type="ChEBI" id="CHEBI:57540"/>
    </ligand>
</feature>
<name>NADK1_STRAW</name>
<organism>
    <name type="scientific">Streptomyces avermitilis (strain ATCC 31267 / DSM 46492 / JCM 5070 / NBRC 14893 / NCIMB 12804 / NRRL 8165 / MA-4680)</name>
    <dbReference type="NCBI Taxonomy" id="227882"/>
    <lineage>
        <taxon>Bacteria</taxon>
        <taxon>Bacillati</taxon>
        <taxon>Actinomycetota</taxon>
        <taxon>Actinomycetes</taxon>
        <taxon>Kitasatosporales</taxon>
        <taxon>Streptomycetaceae</taxon>
        <taxon>Streptomyces</taxon>
    </lineage>
</organism>
<reference key="1">
    <citation type="journal article" date="2001" name="Proc. Natl. Acad. Sci. U.S.A.">
        <title>Genome sequence of an industrial microorganism Streptomyces avermitilis: deducing the ability of producing secondary metabolites.</title>
        <authorList>
            <person name="Omura S."/>
            <person name="Ikeda H."/>
            <person name="Ishikawa J."/>
            <person name="Hanamoto A."/>
            <person name="Takahashi C."/>
            <person name="Shinose M."/>
            <person name="Takahashi Y."/>
            <person name="Horikawa H."/>
            <person name="Nakazawa H."/>
            <person name="Osonoe T."/>
            <person name="Kikuchi H."/>
            <person name="Shiba T."/>
            <person name="Sakaki Y."/>
            <person name="Hattori M."/>
        </authorList>
    </citation>
    <scope>NUCLEOTIDE SEQUENCE [LARGE SCALE GENOMIC DNA]</scope>
    <source>
        <strain>ATCC 31267 / DSM 46492 / JCM 5070 / NBRC 14893 / NCIMB 12804 / NRRL 8165 / MA-4680</strain>
    </source>
</reference>
<reference key="2">
    <citation type="journal article" date="2003" name="Nat. Biotechnol.">
        <title>Complete genome sequence and comparative analysis of the industrial microorganism Streptomyces avermitilis.</title>
        <authorList>
            <person name="Ikeda H."/>
            <person name="Ishikawa J."/>
            <person name="Hanamoto A."/>
            <person name="Shinose M."/>
            <person name="Kikuchi H."/>
            <person name="Shiba T."/>
            <person name="Sakaki Y."/>
            <person name="Hattori M."/>
            <person name="Omura S."/>
        </authorList>
    </citation>
    <scope>NUCLEOTIDE SEQUENCE [LARGE SCALE GENOMIC DNA]</scope>
    <source>
        <strain>ATCC 31267 / DSM 46492 / JCM 5070 / NBRC 14893 / NCIMB 12804 / NRRL 8165 / MA-4680</strain>
    </source>
</reference>
<protein>
    <recommendedName>
        <fullName evidence="1">NAD kinase 1</fullName>
        <ecNumber evidence="1">2.7.1.23</ecNumber>
    </recommendedName>
    <alternativeName>
        <fullName evidence="1">ATP-dependent NAD kinase 1</fullName>
    </alternativeName>
</protein>
<proteinExistence type="inferred from homology"/>
<gene>
    <name evidence="1" type="primary">nadK1</name>
    <name type="ordered locus">SAV_1035</name>
</gene>
<comment type="function">
    <text evidence="1">Involved in the regulation of the intracellular balance of NAD and NADP, and is a key enzyme in the biosynthesis of NADP. Catalyzes specifically the phosphorylation on 2'-hydroxyl of the adenosine moiety of NAD to yield NADP.</text>
</comment>
<comment type="catalytic activity">
    <reaction evidence="1">
        <text>NAD(+) + ATP = ADP + NADP(+) + H(+)</text>
        <dbReference type="Rhea" id="RHEA:18629"/>
        <dbReference type="ChEBI" id="CHEBI:15378"/>
        <dbReference type="ChEBI" id="CHEBI:30616"/>
        <dbReference type="ChEBI" id="CHEBI:57540"/>
        <dbReference type="ChEBI" id="CHEBI:58349"/>
        <dbReference type="ChEBI" id="CHEBI:456216"/>
        <dbReference type="EC" id="2.7.1.23"/>
    </reaction>
</comment>
<comment type="cofactor">
    <cofactor evidence="1">
        <name>a divalent metal cation</name>
        <dbReference type="ChEBI" id="CHEBI:60240"/>
    </cofactor>
</comment>
<comment type="subcellular location">
    <subcellularLocation>
        <location evidence="1">Cytoplasm</location>
    </subcellularLocation>
</comment>
<comment type="similarity">
    <text evidence="1">Belongs to the NAD kinase family.</text>
</comment>